<keyword id="KW-0119">Carbohydrate metabolism</keyword>
<keyword id="KW-0256">Endoplasmic reticulum</keyword>
<keyword id="KW-0294">Fucose metabolism</keyword>
<keyword id="KW-1185">Reference proteome</keyword>
<keyword id="KW-0732">Signal</keyword>
<keyword id="KW-0808">Transferase</keyword>
<sequence>MKFIIVLLLFFFFKVIDRVICVTPQKLICLKEDVYLGDFFFFLKRKKYIMYDVNIGEGFNLQKEIFYRLSLVIYNLNKKDKINIYYLVLPPWCYVTHWNIRKGNNLRWEFFFNTDIMKKVIPIIEYEEYEKLYGNYSDIMINSKYILDNYKEKSFLILPFEECNINVNRFKQFCKKCEHKYNVLYSGYCTTINTKQSECYSYNMISNYFITSILENLFLYNITSVLIKQSTNILVPFVNELYQSNLEDILLFNNKLLSYGNNYISNILKTNHYISSHLRYTDFKYISRYNVPPIHIALLKLLYIMFINNCRIIFIASDEKVEIQKVINKDFHQYKKHFYFYNNQNNLHEGEFSIIEQWICTRSYIFIGNIFSRFTMNINWERHLINKGQINQNIDLCSYHINDDNDQDIKNSYKKIVHIFNHKALQKIKNIYDNYSDRDKKYINTICYNFLSHFPNNRSIYRKEYITNT</sequence>
<protein>
    <recommendedName>
        <fullName evidence="7">GDP-fucose protein O-fucosyltransferase 2</fullName>
        <ecNumber evidence="1">2.4.1.221</ecNumber>
    </recommendedName>
    <alternativeName>
        <fullName evidence="6">Protein O-fucosyltransferase 2</fullName>
    </alternativeName>
</protein>
<proteinExistence type="evidence at protein level"/>
<feature type="signal peptide" evidence="3">
    <location>
        <begin position="1"/>
        <end position="18"/>
    </location>
</feature>
<feature type="chain" id="PRO_0000455542" description="GDP-fucose protein O-fucosyltransferase 2" evidence="3">
    <location>
        <begin position="19"/>
        <end position="469"/>
    </location>
</feature>
<feature type="active site" description="Proton acceptor" evidence="2">
    <location>
        <position position="57"/>
    </location>
</feature>
<feature type="binding site" evidence="2">
    <location>
        <begin position="56"/>
        <end position="60"/>
    </location>
    <ligand>
        <name>GDP-beta-L-fucose</name>
        <dbReference type="ChEBI" id="CHEBI:57273"/>
    </ligand>
</feature>
<feature type="binding site" evidence="2">
    <location>
        <begin position="277"/>
        <end position="279"/>
    </location>
    <ligand>
        <name>GDP-beta-L-fucose</name>
        <dbReference type="ChEBI" id="CHEBI:57273"/>
    </ligand>
</feature>
<feature type="binding site" evidence="2">
    <location>
        <begin position="373"/>
        <end position="374"/>
    </location>
    <ligand>
        <name>GDP-beta-L-fucose</name>
        <dbReference type="ChEBI" id="CHEBI:57273"/>
    </ligand>
</feature>
<feature type="site" description="Essential for catalytic activity" evidence="2">
    <location>
        <position position="381"/>
    </location>
</feature>
<accession>W7K6N5</accession>
<organism evidence="9">
    <name type="scientific">Plasmodium falciparum (isolate NF54)</name>
    <dbReference type="NCBI Taxonomy" id="5843"/>
    <lineage>
        <taxon>Eukaryota</taxon>
        <taxon>Sar</taxon>
        <taxon>Alveolata</taxon>
        <taxon>Apicomplexa</taxon>
        <taxon>Aconoidasida</taxon>
        <taxon>Haemosporida</taxon>
        <taxon>Plasmodiidae</taxon>
        <taxon>Plasmodium</taxon>
        <taxon>Plasmodium (Laverania)</taxon>
    </lineage>
</organism>
<reference evidence="9" key="1">
    <citation type="submission" date="2013-02" db="EMBL/GenBank/DDBJ databases">
        <title>The Genome Sequence of Plasmodium falciparum NF54.</title>
        <authorList>
            <consortium name="The Broad Institute Genome Sequencing Platform"/>
            <consortium name="The Broad Institute Genome Sequencing Center for Infectious Disease"/>
            <person name="Neafsey D."/>
            <person name="Cheeseman I."/>
            <person name="Volkman S."/>
            <person name="Adams J."/>
            <person name="Walker B."/>
            <person name="Young S.K."/>
            <person name="Zeng Q."/>
            <person name="Gargeya S."/>
            <person name="Fitzgerald M."/>
            <person name="Haas B."/>
            <person name="Abouelleil A."/>
            <person name="Alvarado L."/>
            <person name="Arachchi H.M."/>
            <person name="Berlin A.M."/>
            <person name="Chapman S.B."/>
            <person name="Dewar J."/>
            <person name="Goldberg J."/>
            <person name="Griggs A."/>
            <person name="Gujja S."/>
            <person name="Hansen M."/>
            <person name="Howarth C."/>
            <person name="Imamovic A."/>
            <person name="Larimer J."/>
            <person name="McCowan C."/>
            <person name="Murphy C."/>
            <person name="Neiman D."/>
            <person name="Pearson M."/>
            <person name="Priest M."/>
            <person name="Roberts A."/>
            <person name="Saif S."/>
            <person name="Shea T."/>
            <person name="Sisk P."/>
            <person name="Sykes S."/>
            <person name="Wortman J."/>
            <person name="Nusbaum C."/>
            <person name="Birren B."/>
        </authorList>
    </citation>
    <scope>NUCLEOTIDE SEQUENCE [LARGE SCALE GENOMIC DNA]</scope>
    <source>
        <strain evidence="9">NF54</strain>
    </source>
</reference>
<reference evidence="7" key="2">
    <citation type="journal article" date="2017" name="Nat. Commun.">
        <title>Protein O-fucosylation in Plasmodium falciparum ensures efficient infection of mosquito and vertebrate hosts.</title>
        <authorList>
            <person name="Lopaticki S."/>
            <person name="Yang A.S.P."/>
            <person name="John A."/>
            <person name="Scott N.E."/>
            <person name="Lingford J.P."/>
            <person name="O'Neill M.T."/>
            <person name="Erickson S.M."/>
            <person name="McKenzie N.C."/>
            <person name="Jennison C."/>
            <person name="Whitehead L.W."/>
            <person name="Douglas D.N."/>
            <person name="Kneteman N.M."/>
            <person name="Goddard-Borger E.D."/>
            <person name="Boddey J.A."/>
        </authorList>
    </citation>
    <scope>FUNCTION</scope>
    <scope>SUBCELLULAR LOCATION</scope>
    <scope>DEVELOPMENTAL STAGE</scope>
    <scope>DISRUPTION PHENOTYPE</scope>
</reference>
<reference evidence="7" key="3">
    <citation type="journal article" date="2019" name="Front. Cell. Infect. Microbiol.">
        <title>Protein O-Fucosyltransferase 2 Is Not Essential for Plasmodium berghei Development.</title>
        <authorList>
            <person name="Sanz S."/>
            <person name="Aquilini E."/>
            <person name="Tweedell R.E."/>
            <person name="Verma G."/>
            <person name="Hamerly T."/>
            <person name="Hritzo B."/>
            <person name="Tripathi A."/>
            <person name="Machado M."/>
            <person name="Churcher T.S."/>
            <person name="Rodrigues J.A."/>
            <person name="Izquierdo L."/>
            <person name="Dinglasan R.R."/>
        </authorList>
    </citation>
    <scope>FUNCTION</scope>
    <scope>DISRUPTION PHENOTYPE</scope>
</reference>
<dbReference type="EC" id="2.4.1.221" evidence="1"/>
<dbReference type="EMBL" id="KE123806">
    <property type="protein sequence ID" value="EWC88665.1"/>
    <property type="status" value="ALT_SEQ"/>
    <property type="molecule type" value="Genomic_DNA"/>
</dbReference>
<dbReference type="SMR" id="W7K6N5"/>
<dbReference type="EnsemblProtists" id="EWC88665">
    <property type="protein sequence ID" value="EWC88665"/>
    <property type="gene ID" value="PFNF54_02509"/>
</dbReference>
<dbReference type="UniPathway" id="UPA00378"/>
<dbReference type="Proteomes" id="UP000030673">
    <property type="component" value="Unassembled WGS sequence"/>
</dbReference>
<dbReference type="GO" id="GO:0005783">
    <property type="term" value="C:endoplasmic reticulum"/>
    <property type="evidence" value="ECO:0000314"/>
    <property type="project" value="UniProtKB"/>
</dbReference>
<dbReference type="GO" id="GO:0046922">
    <property type="term" value="F:peptide-O-fucosyltransferase activity"/>
    <property type="evidence" value="ECO:0007669"/>
    <property type="project" value="InterPro"/>
</dbReference>
<dbReference type="GO" id="GO:0006004">
    <property type="term" value="P:fucose metabolic process"/>
    <property type="evidence" value="ECO:0007669"/>
    <property type="project" value="UniProtKB-KW"/>
</dbReference>
<dbReference type="CDD" id="cd11298">
    <property type="entry name" value="O-FucT-2"/>
    <property type="match status" value="1"/>
</dbReference>
<dbReference type="FunFam" id="3.40.50.11340:FF:000009">
    <property type="entry name" value="GDP-fucose protein O-fucosyltransferase 2, putative"/>
    <property type="match status" value="1"/>
</dbReference>
<dbReference type="FunFam" id="3.40.50.11350:FF:000010">
    <property type="entry name" value="GDP-fucose protein O-fucosyltransferase 2, putative"/>
    <property type="match status" value="1"/>
</dbReference>
<dbReference type="Gene3D" id="3.40.50.11340">
    <property type="match status" value="1"/>
</dbReference>
<dbReference type="Gene3D" id="3.40.50.11350">
    <property type="match status" value="1"/>
</dbReference>
<dbReference type="InterPro" id="IPR019378">
    <property type="entry name" value="GDP-Fuc_O-FucTrfase"/>
</dbReference>
<dbReference type="InterPro" id="IPR045130">
    <property type="entry name" value="OFUT2-like"/>
</dbReference>
<dbReference type="PANTHER" id="PTHR13398">
    <property type="entry name" value="GDP-FUCOSE PROTEIN O-FUCOSYLTRANSFERASE 2"/>
    <property type="match status" value="1"/>
</dbReference>
<dbReference type="PANTHER" id="PTHR13398:SF0">
    <property type="entry name" value="GDP-FUCOSE PROTEIN O-FUCOSYLTRANSFERASE 2"/>
    <property type="match status" value="1"/>
</dbReference>
<dbReference type="Pfam" id="PF10250">
    <property type="entry name" value="O-FucT"/>
    <property type="match status" value="1"/>
</dbReference>
<name>OFUT2_PLAFO</name>
<evidence type="ECO:0000250" key="1">
    <source>
        <dbReference type="UniProtKB" id="A5K6G1"/>
    </source>
</evidence>
<evidence type="ECO:0000250" key="2">
    <source>
        <dbReference type="UniProtKB" id="Q9Y2G5"/>
    </source>
</evidence>
<evidence type="ECO:0000255" key="3"/>
<evidence type="ECO:0000269" key="4">
    <source>
    </source>
</evidence>
<evidence type="ECO:0000269" key="5">
    <source>
    </source>
</evidence>
<evidence type="ECO:0000303" key="6">
    <source>
    </source>
</evidence>
<evidence type="ECO:0000305" key="7"/>
<evidence type="ECO:0000312" key="8">
    <source>
        <dbReference type="EMBL" id="EWC88665.1"/>
    </source>
</evidence>
<evidence type="ECO:0000312" key="9">
    <source>
        <dbReference type="Proteomes" id="UP000030673"/>
    </source>
</evidence>
<gene>
    <name evidence="6" type="primary">POFUT2</name>
    <name evidence="8" type="ORF">PFNF54_02509</name>
</gene>
<comment type="function">
    <text evidence="1 4 5">Catalyzes the reaction that attaches fucose through an O-glycosidic linkage to a conserved serine or threonine residue in the consensus sequence C1-X-X-S/T-C2 of thrombospondin type I repeats (TSRs) where C1 and C2 are the first and second cysteines of the repeat, respectively (By similarity). O-fucosylates sporozoite proteins CSP and TRAP (By similarity). O-fucosylation regulates stability and intracellular trafficking of TRAP but not of CSP (PubMed:28916755). Probably by regulating protein O-fucosylation, may play a role in parasite transmission to the mosquito vector and/or infection of the vertebrate host hepatocytes; however, POFUT2 involvement in transmission/infection is controversial (PubMed:28916755, PubMed:31334132).</text>
</comment>
<comment type="catalytic activity">
    <reaction evidence="1">
        <text>L-seryl-[protein] + GDP-beta-L-fucose = 3-O-(alpha-L-fucosyl)-L-seryl-[protein] + GDP + H(+)</text>
        <dbReference type="Rhea" id="RHEA:63644"/>
        <dbReference type="Rhea" id="RHEA-COMP:9863"/>
        <dbReference type="Rhea" id="RHEA-COMP:17914"/>
        <dbReference type="ChEBI" id="CHEBI:15378"/>
        <dbReference type="ChEBI" id="CHEBI:29999"/>
        <dbReference type="ChEBI" id="CHEBI:57273"/>
        <dbReference type="ChEBI" id="CHEBI:58189"/>
        <dbReference type="ChEBI" id="CHEBI:189632"/>
        <dbReference type="EC" id="2.4.1.221"/>
    </reaction>
    <physiologicalReaction direction="left-to-right" evidence="1">
        <dbReference type="Rhea" id="RHEA:63645"/>
    </physiologicalReaction>
</comment>
<comment type="catalytic activity">
    <reaction evidence="1">
        <text>L-threonyl-[protein] + GDP-beta-L-fucose = 3-O-(alpha-L-fucosyl)-L-threonyl-[protein] + GDP + H(+)</text>
        <dbReference type="Rhea" id="RHEA:70491"/>
        <dbReference type="Rhea" id="RHEA-COMP:11060"/>
        <dbReference type="Rhea" id="RHEA-COMP:17915"/>
        <dbReference type="ChEBI" id="CHEBI:15378"/>
        <dbReference type="ChEBI" id="CHEBI:30013"/>
        <dbReference type="ChEBI" id="CHEBI:57273"/>
        <dbReference type="ChEBI" id="CHEBI:58189"/>
        <dbReference type="ChEBI" id="CHEBI:189631"/>
        <dbReference type="EC" id="2.4.1.221"/>
    </reaction>
    <physiologicalReaction direction="left-to-right" evidence="1">
        <dbReference type="Rhea" id="RHEA:70492"/>
    </physiologicalReaction>
</comment>
<comment type="pathway">
    <text evidence="1">Protein modification; protein glycosylation.</text>
</comment>
<comment type="subcellular location">
    <subcellularLocation>
        <location evidence="4">Endoplasmic reticulum</location>
    </subcellularLocation>
</comment>
<comment type="developmental stage">
    <text evidence="4">Expressed during parasite asexual blood stages, including at the ring, trophozoite and schizont stages (at protein level).</text>
</comment>
<comment type="disruption phenotype">
    <text evidence="4 5">In S.stephensi mosquito vector, development into ookinete is normal; however, the number of oocysts developing at the basal lamina of the mosquito midgut is reduced resulting in 45-55% fewer sporozoites in the mosquito salivary glands (PubMed:28916755). In sporozoites, cell traversal activity, invasion of host hepatocytes and gliding motility are severely reduced (PubMed:28916755). Also, TRAP, but not CSP, protein levels are reduced and TRAP localization to the cell membrane is impaired (PubMed:28916755). Development in host erythrocytes and gametogenesis are normal (PubMed:28916755). However, another study showed that in A.gambiae mosquito vector, number of oocysts in the midgut, number of sporozoites in the salivary glands, and sporozoite gliding motility are normal (PubMed:31334132). Also invasion of host hepatocytes by sporozoites is normal (PubMed:31334132).</text>
</comment>
<comment type="similarity">
    <text evidence="7">Belongs to the glycosyltransferase 68 family.</text>
</comment>
<comment type="sequence caution" evidence="7">
    <conflict type="erroneous initiation">
        <sequence resource="EMBL-CDS" id="EWC88665"/>
    </conflict>
    <text>Truncated N-terminus.</text>
</comment>